<gene>
    <name type="ordered locus">Rv2560</name>
    <name type="ORF">MTCY9C4.08c</name>
</gene>
<feature type="chain" id="PRO_0000104041" description="Uncharacterized protein Rv2560">
    <location>
        <begin position="1"/>
        <end position="325"/>
    </location>
</feature>
<feature type="transmembrane region" description="Helical" evidence="1">
    <location>
        <begin position="96"/>
        <end position="116"/>
    </location>
</feature>
<feature type="transmembrane region" description="Helical" evidence="1">
    <location>
        <begin position="153"/>
        <end position="173"/>
    </location>
</feature>
<feature type="transmembrane region" description="Helical" evidence="1">
    <location>
        <begin position="205"/>
        <end position="225"/>
    </location>
</feature>
<feature type="transmembrane region" description="Helical" evidence="1">
    <location>
        <begin position="273"/>
        <end position="293"/>
    </location>
</feature>
<feature type="region of interest" description="Disordered" evidence="2">
    <location>
        <begin position="1"/>
        <end position="75"/>
    </location>
</feature>
<feature type="compositionally biased region" description="Pro residues" evidence="2">
    <location>
        <begin position="24"/>
        <end position="70"/>
    </location>
</feature>
<comment type="subcellular location">
    <subcellularLocation>
        <location evidence="3">Cell membrane</location>
        <topology evidence="3">Multi-pass membrane protein</topology>
    </subcellularLocation>
</comment>
<reference key="1">
    <citation type="journal article" date="1998" name="Nature">
        <title>Deciphering the biology of Mycobacterium tuberculosis from the complete genome sequence.</title>
        <authorList>
            <person name="Cole S.T."/>
            <person name="Brosch R."/>
            <person name="Parkhill J."/>
            <person name="Garnier T."/>
            <person name="Churcher C.M."/>
            <person name="Harris D.E."/>
            <person name="Gordon S.V."/>
            <person name="Eiglmeier K."/>
            <person name="Gas S."/>
            <person name="Barry C.E. III"/>
            <person name="Tekaia F."/>
            <person name="Badcock K."/>
            <person name="Basham D."/>
            <person name="Brown D."/>
            <person name="Chillingworth T."/>
            <person name="Connor R."/>
            <person name="Davies R.M."/>
            <person name="Devlin K."/>
            <person name="Feltwell T."/>
            <person name="Gentles S."/>
            <person name="Hamlin N."/>
            <person name="Holroyd S."/>
            <person name="Hornsby T."/>
            <person name="Jagels K."/>
            <person name="Krogh A."/>
            <person name="McLean J."/>
            <person name="Moule S."/>
            <person name="Murphy L.D."/>
            <person name="Oliver S."/>
            <person name="Osborne J."/>
            <person name="Quail M.A."/>
            <person name="Rajandream M.A."/>
            <person name="Rogers J."/>
            <person name="Rutter S."/>
            <person name="Seeger K."/>
            <person name="Skelton S."/>
            <person name="Squares S."/>
            <person name="Squares R."/>
            <person name="Sulston J.E."/>
            <person name="Taylor K."/>
            <person name="Whitehead S."/>
            <person name="Barrell B.G."/>
        </authorList>
    </citation>
    <scope>NUCLEOTIDE SEQUENCE [LARGE SCALE GENOMIC DNA]</scope>
    <source>
        <strain>ATCC 25618 / H37Rv</strain>
    </source>
</reference>
<reference key="2">
    <citation type="journal article" date="2011" name="Mol. Cell. Proteomics">
        <title>Proteogenomic analysis of Mycobacterium tuberculosis by high resolution mass spectrometry.</title>
        <authorList>
            <person name="Kelkar D.S."/>
            <person name="Kumar D."/>
            <person name="Kumar P."/>
            <person name="Balakrishnan L."/>
            <person name="Muthusamy B."/>
            <person name="Yadav A.K."/>
            <person name="Shrivastava P."/>
            <person name="Marimuthu A."/>
            <person name="Anand S."/>
            <person name="Sundaram H."/>
            <person name="Kingsbury R."/>
            <person name="Harsha H.C."/>
            <person name="Nair B."/>
            <person name="Prasad T.S."/>
            <person name="Chauhan D.S."/>
            <person name="Katoch K."/>
            <person name="Katoch V.M."/>
            <person name="Kumar P."/>
            <person name="Chaerkady R."/>
            <person name="Ramachandran S."/>
            <person name="Dash D."/>
            <person name="Pandey A."/>
        </authorList>
    </citation>
    <scope>IDENTIFICATION BY MASS SPECTROMETRY [LARGE SCALE ANALYSIS]</scope>
    <source>
        <strain>ATCC 25618 / H37Rv</strain>
    </source>
</reference>
<protein>
    <recommendedName>
        <fullName>Uncharacterized protein Rv2560</fullName>
    </recommendedName>
</protein>
<sequence>MSQPPEHPGNPADPQGGNQGAGSYPPPGYGAPPPPPGYGPPPGTYLPPGYNAPPPPPGYGPPPGPPPPGYPTHLQSSGFSVGDAISWSWNRFTQNAVTLVVPVLAYAVALAAVIGATAGLVVALSDRATTAYTNTSGVSSESVDITMTPAAGIVMFLGYIALFALVLYMHAGILTGCLDIADGKPVTIATFFRPRNLGLVLVTGLLIVAVTFIGGLLCVIPGLIFGFVAQFAVAFAVDRSTSPIDSVKASIETVGSNIGGSVLSWLAQLTAVLVGELLCFVGMLIGIPVAALIHVYTYRKLSGGQVVEAVRPAPPVGWPPGPQLA</sequence>
<keyword id="KW-1003">Cell membrane</keyword>
<keyword id="KW-0472">Membrane</keyword>
<keyword id="KW-1185">Reference proteome</keyword>
<keyword id="KW-0812">Transmembrane</keyword>
<keyword id="KW-1133">Transmembrane helix</keyword>
<name>Y2560_MYCTU</name>
<evidence type="ECO:0000255" key="1"/>
<evidence type="ECO:0000256" key="2">
    <source>
        <dbReference type="SAM" id="MobiDB-lite"/>
    </source>
</evidence>
<evidence type="ECO:0000305" key="3"/>
<accession>P9WLA1</accession>
<accession>L0TA56</accession>
<accession>Q50738</accession>
<dbReference type="EMBL" id="AL123456">
    <property type="protein sequence ID" value="CCP45356.1"/>
    <property type="molecule type" value="Genomic_DNA"/>
</dbReference>
<dbReference type="PIR" id="D70728">
    <property type="entry name" value="D70728"/>
</dbReference>
<dbReference type="RefSeq" id="NP_217076.1">
    <property type="nucleotide sequence ID" value="NC_000962.3"/>
</dbReference>
<dbReference type="RefSeq" id="WP_003911922.1">
    <property type="nucleotide sequence ID" value="NZ_KK339370.1"/>
</dbReference>
<dbReference type="STRING" id="83332.Rv2560"/>
<dbReference type="PaxDb" id="83332-Rv2560"/>
<dbReference type="DNASU" id="887363"/>
<dbReference type="GeneID" id="887363"/>
<dbReference type="KEGG" id="mtu:Rv2560"/>
<dbReference type="KEGG" id="mtv:RVBD_2560"/>
<dbReference type="PATRIC" id="fig|83332.111.peg.2861"/>
<dbReference type="TubercuList" id="Rv2560"/>
<dbReference type="eggNOG" id="COG5473">
    <property type="taxonomic scope" value="Bacteria"/>
</dbReference>
<dbReference type="InParanoid" id="P9WLA1"/>
<dbReference type="OrthoDB" id="4829830at2"/>
<dbReference type="Proteomes" id="UP000001584">
    <property type="component" value="Chromosome"/>
</dbReference>
<dbReference type="GO" id="GO:0005886">
    <property type="term" value="C:plasma membrane"/>
    <property type="evidence" value="ECO:0000314"/>
    <property type="project" value="MTBBASE"/>
</dbReference>
<proteinExistence type="evidence at protein level"/>
<organism>
    <name type="scientific">Mycobacterium tuberculosis (strain ATCC 25618 / H37Rv)</name>
    <dbReference type="NCBI Taxonomy" id="83332"/>
    <lineage>
        <taxon>Bacteria</taxon>
        <taxon>Bacillati</taxon>
        <taxon>Actinomycetota</taxon>
        <taxon>Actinomycetes</taxon>
        <taxon>Mycobacteriales</taxon>
        <taxon>Mycobacteriaceae</taxon>
        <taxon>Mycobacterium</taxon>
        <taxon>Mycobacterium tuberculosis complex</taxon>
    </lineage>
</organism>